<protein>
    <recommendedName>
        <fullName evidence="1">Small ribosomal subunit protein uS7</fullName>
    </recommendedName>
    <alternativeName>
        <fullName evidence="2">30S ribosomal protein S7</fullName>
    </alternativeName>
</protein>
<keyword id="KW-0002">3D-structure</keyword>
<keyword id="KW-1185">Reference proteome</keyword>
<keyword id="KW-0687">Ribonucleoprotein</keyword>
<keyword id="KW-0689">Ribosomal protein</keyword>
<keyword id="KW-0694">RNA-binding</keyword>
<keyword id="KW-0699">rRNA-binding</keyword>
<keyword id="KW-0820">tRNA-binding</keyword>
<dbReference type="EMBL" id="CP000253">
    <property type="protein sequence ID" value="ABD29676.1"/>
    <property type="molecule type" value="Genomic_DNA"/>
</dbReference>
<dbReference type="EMBL" id="U20869">
    <property type="protein sequence ID" value="AAC46354.1"/>
    <property type="molecule type" value="Genomic_DNA"/>
</dbReference>
<dbReference type="RefSeq" id="WP_001137495.1">
    <property type="nucleotide sequence ID" value="NZ_LS483365.1"/>
</dbReference>
<dbReference type="RefSeq" id="YP_499100.1">
    <property type="nucleotide sequence ID" value="NC_007795.1"/>
</dbReference>
<dbReference type="PDB" id="5LI0">
    <property type="method" value="EM"/>
    <property type="resolution" value="3.80 A"/>
    <property type="chains" value="g=7-156"/>
</dbReference>
<dbReference type="PDB" id="5ND8">
    <property type="method" value="EM"/>
    <property type="resolution" value="3.70 A"/>
    <property type="chains" value="g=1-156"/>
</dbReference>
<dbReference type="PDB" id="5ND9">
    <property type="method" value="EM"/>
    <property type="resolution" value="3.70 A"/>
    <property type="chains" value="g=1-156"/>
</dbReference>
<dbReference type="PDB" id="5TCU">
    <property type="method" value="EM"/>
    <property type="resolution" value="3.90 A"/>
    <property type="chains" value="SG=2-156"/>
</dbReference>
<dbReference type="PDB" id="6YEF">
    <property type="method" value="EM"/>
    <property type="resolution" value="3.20 A"/>
    <property type="chains" value="g=1-156"/>
</dbReference>
<dbReference type="PDB" id="7BGE">
    <property type="method" value="EM"/>
    <property type="resolution" value="3.60 A"/>
    <property type="chains" value="g=1-156"/>
</dbReference>
<dbReference type="PDB" id="7KWG">
    <property type="method" value="EM"/>
    <property type="resolution" value="3.75 A"/>
    <property type="chains" value="g=1-156"/>
</dbReference>
<dbReference type="PDB" id="7NHL">
    <property type="method" value="EM"/>
    <property type="resolution" value="3.10 A"/>
    <property type="chains" value="h=1-156"/>
</dbReference>
<dbReference type="PDB" id="7NHM">
    <property type="method" value="EM"/>
    <property type="resolution" value="3.10 A"/>
    <property type="chains" value="h=1-156"/>
</dbReference>
<dbReference type="PDB" id="8BH6">
    <property type="method" value="EM"/>
    <property type="resolution" value="3.70 A"/>
    <property type="chains" value="g=1-156"/>
</dbReference>
<dbReference type="PDB" id="8BH7">
    <property type="method" value="EM"/>
    <property type="resolution" value="4.23 A"/>
    <property type="chains" value="g=1-156"/>
</dbReference>
<dbReference type="PDB" id="8BYV">
    <property type="method" value="EM"/>
    <property type="resolution" value="2.89 A"/>
    <property type="chains" value="g=1-156"/>
</dbReference>
<dbReference type="PDB" id="8P2F">
    <property type="method" value="EM"/>
    <property type="resolution" value="2.44 A"/>
    <property type="chains" value="h=1-156"/>
</dbReference>
<dbReference type="PDB" id="8P2G">
    <property type="method" value="EM"/>
    <property type="resolution" value="2.02 A"/>
    <property type="chains" value="h=1-156"/>
</dbReference>
<dbReference type="PDB" id="8P2H">
    <property type="method" value="EM"/>
    <property type="resolution" value="2.49 A"/>
    <property type="chains" value="h=1-156"/>
</dbReference>
<dbReference type="PDBsum" id="5LI0"/>
<dbReference type="PDBsum" id="5ND8"/>
<dbReference type="PDBsum" id="5ND9"/>
<dbReference type="PDBsum" id="5TCU"/>
<dbReference type="PDBsum" id="6YEF"/>
<dbReference type="PDBsum" id="7BGE"/>
<dbReference type="PDBsum" id="7KWG"/>
<dbReference type="PDBsum" id="7NHL"/>
<dbReference type="PDBsum" id="7NHM"/>
<dbReference type="PDBsum" id="8BH6"/>
<dbReference type="PDBsum" id="8BH7"/>
<dbReference type="PDBsum" id="8BYV"/>
<dbReference type="PDBsum" id="8P2F"/>
<dbReference type="PDBsum" id="8P2G"/>
<dbReference type="PDBsum" id="8P2H"/>
<dbReference type="EMDB" id="EMD-10791"/>
<dbReference type="EMDB" id="EMD-12179"/>
<dbReference type="EMDB" id="EMD-12332"/>
<dbReference type="EMDB" id="EMD-12333"/>
<dbReference type="EMDB" id="EMD-16048"/>
<dbReference type="EMDB" id="EMD-16049"/>
<dbReference type="EMDB" id="EMD-16334"/>
<dbReference type="EMDB" id="EMD-17363"/>
<dbReference type="EMDB" id="EMD-17364"/>
<dbReference type="EMDB" id="EMD-17365"/>
<dbReference type="EMDB" id="EMD-23052"/>
<dbReference type="EMDB" id="EMD-3624"/>
<dbReference type="EMDB" id="EMD-3625"/>
<dbReference type="EMDB" id="EMD-4050"/>
<dbReference type="EMDB" id="EMD-8402"/>
<dbReference type="SMR" id="P48940"/>
<dbReference type="IntAct" id="P48940">
    <property type="interactions" value="1"/>
</dbReference>
<dbReference type="STRING" id="93061.SAOUHSC_00528"/>
<dbReference type="PaxDb" id="1280-SAXN108_0600"/>
<dbReference type="GeneID" id="3920381"/>
<dbReference type="GeneID" id="98344880"/>
<dbReference type="KEGG" id="sao:SAOUHSC_00528"/>
<dbReference type="PATRIC" id="fig|93061.5.peg.474"/>
<dbReference type="eggNOG" id="COG0049">
    <property type="taxonomic scope" value="Bacteria"/>
</dbReference>
<dbReference type="HOGENOM" id="CLU_072226_1_1_9"/>
<dbReference type="OrthoDB" id="9807653at2"/>
<dbReference type="PRO" id="PR:P48940"/>
<dbReference type="Proteomes" id="UP000008816">
    <property type="component" value="Chromosome"/>
</dbReference>
<dbReference type="GO" id="GO:0022627">
    <property type="term" value="C:cytosolic small ribosomal subunit"/>
    <property type="evidence" value="ECO:0000318"/>
    <property type="project" value="GO_Central"/>
</dbReference>
<dbReference type="GO" id="GO:0005840">
    <property type="term" value="C:ribosome"/>
    <property type="evidence" value="ECO:0000318"/>
    <property type="project" value="GO_Central"/>
</dbReference>
<dbReference type="GO" id="GO:0003729">
    <property type="term" value="F:mRNA binding"/>
    <property type="evidence" value="ECO:0000318"/>
    <property type="project" value="GO_Central"/>
</dbReference>
<dbReference type="GO" id="GO:0019843">
    <property type="term" value="F:rRNA binding"/>
    <property type="evidence" value="ECO:0000318"/>
    <property type="project" value="GO_Central"/>
</dbReference>
<dbReference type="GO" id="GO:0003735">
    <property type="term" value="F:structural constituent of ribosome"/>
    <property type="evidence" value="ECO:0000318"/>
    <property type="project" value="GO_Central"/>
</dbReference>
<dbReference type="GO" id="GO:0000049">
    <property type="term" value="F:tRNA binding"/>
    <property type="evidence" value="ECO:0007669"/>
    <property type="project" value="UniProtKB-UniRule"/>
</dbReference>
<dbReference type="GO" id="GO:0000028">
    <property type="term" value="P:ribosomal small subunit assembly"/>
    <property type="evidence" value="ECO:0000318"/>
    <property type="project" value="GO_Central"/>
</dbReference>
<dbReference type="GO" id="GO:0006412">
    <property type="term" value="P:translation"/>
    <property type="evidence" value="ECO:0000318"/>
    <property type="project" value="GO_Central"/>
</dbReference>
<dbReference type="CDD" id="cd14869">
    <property type="entry name" value="uS7_Bacteria"/>
    <property type="match status" value="1"/>
</dbReference>
<dbReference type="FunFam" id="1.10.455.10:FF:000001">
    <property type="entry name" value="30S ribosomal protein S7"/>
    <property type="match status" value="1"/>
</dbReference>
<dbReference type="Gene3D" id="1.10.455.10">
    <property type="entry name" value="Ribosomal protein S7 domain"/>
    <property type="match status" value="1"/>
</dbReference>
<dbReference type="HAMAP" id="MF_00480_B">
    <property type="entry name" value="Ribosomal_uS7_B"/>
    <property type="match status" value="1"/>
</dbReference>
<dbReference type="InterPro" id="IPR000235">
    <property type="entry name" value="Ribosomal_uS7"/>
</dbReference>
<dbReference type="InterPro" id="IPR005717">
    <property type="entry name" value="Ribosomal_uS7_bac/org-type"/>
</dbReference>
<dbReference type="InterPro" id="IPR020606">
    <property type="entry name" value="Ribosomal_uS7_CS"/>
</dbReference>
<dbReference type="InterPro" id="IPR023798">
    <property type="entry name" value="Ribosomal_uS7_dom"/>
</dbReference>
<dbReference type="InterPro" id="IPR036823">
    <property type="entry name" value="Ribosomal_uS7_dom_sf"/>
</dbReference>
<dbReference type="NCBIfam" id="TIGR01029">
    <property type="entry name" value="rpsG_bact"/>
    <property type="match status" value="1"/>
</dbReference>
<dbReference type="PANTHER" id="PTHR11205">
    <property type="entry name" value="RIBOSOMAL PROTEIN S7"/>
    <property type="match status" value="1"/>
</dbReference>
<dbReference type="Pfam" id="PF00177">
    <property type="entry name" value="Ribosomal_S7"/>
    <property type="match status" value="1"/>
</dbReference>
<dbReference type="PIRSF" id="PIRSF002122">
    <property type="entry name" value="RPS7p_RPS7a_RPS5e_RPS7o"/>
    <property type="match status" value="1"/>
</dbReference>
<dbReference type="SUPFAM" id="SSF47973">
    <property type="entry name" value="Ribosomal protein S7"/>
    <property type="match status" value="1"/>
</dbReference>
<dbReference type="PROSITE" id="PS00052">
    <property type="entry name" value="RIBOSOMAL_S7"/>
    <property type="match status" value="1"/>
</dbReference>
<evidence type="ECO:0000255" key="1">
    <source>
        <dbReference type="HAMAP-Rule" id="MF_00480"/>
    </source>
</evidence>
<evidence type="ECO:0000305" key="2"/>
<evidence type="ECO:0007829" key="3">
    <source>
        <dbReference type="PDB" id="8BYV"/>
    </source>
</evidence>
<proteinExistence type="evidence at protein level"/>
<reference key="1">
    <citation type="book" date="2006" name="Gram positive pathogens, 2nd edition">
        <title>The Staphylococcus aureus NCTC 8325 genome.</title>
        <editorList>
            <person name="Fischetti V."/>
            <person name="Novick R."/>
            <person name="Ferretti J."/>
            <person name="Portnoy D."/>
            <person name="Rood J."/>
        </editorList>
        <authorList>
            <person name="Gillaspy A.F."/>
            <person name="Worrell V."/>
            <person name="Orvis J."/>
            <person name="Roe B.A."/>
            <person name="Dyer D.W."/>
            <person name="Iandolo J.J."/>
        </authorList>
    </citation>
    <scope>NUCLEOTIDE SEQUENCE [LARGE SCALE GENOMIC DNA]</scope>
    <source>
        <strain>NCTC 8325 / PS 47</strain>
    </source>
</reference>
<reference key="2">
    <citation type="journal article" date="1998" name="J. Bacteriol.">
        <title>Penicillin-binding protein 1 of Staphylococcus aureus is essential for growth.</title>
        <authorList>
            <person name="Wada A."/>
            <person name="Watanabe H."/>
        </authorList>
    </citation>
    <scope>NUCLEOTIDE SEQUENCE [GENOMIC DNA] OF 1-42</scope>
</reference>
<organism>
    <name type="scientific">Staphylococcus aureus (strain NCTC 8325 / PS 47)</name>
    <dbReference type="NCBI Taxonomy" id="93061"/>
    <lineage>
        <taxon>Bacteria</taxon>
        <taxon>Bacillati</taxon>
        <taxon>Bacillota</taxon>
        <taxon>Bacilli</taxon>
        <taxon>Bacillales</taxon>
        <taxon>Staphylococcaceae</taxon>
        <taxon>Staphylococcus</taxon>
    </lineage>
</organism>
<gene>
    <name evidence="1" type="primary">rpsG</name>
    <name type="ordered locus">SAOUHSC_00528</name>
</gene>
<sequence length="156" mass="17795">MPRKGSVPKRDVLPDPIHNSKLVTKLINKIMLDGKRGTAQRILYSAFDLVEQRSGRDALEVFEEAINNIMPVLEVKARRVGGSNYQVPVEVRPERRTTLGLRWLVNYARLRGEKTMEDRLANEILDAANNTGGAVKKREDTHKMAEANKAFAHYRW</sequence>
<comment type="function">
    <text evidence="1">One of the primary rRNA binding proteins, it binds directly to 16S rRNA where it nucleates assembly of the head domain of the 30S subunit. Is located at the subunit interface close to the decoding center, probably blocks exit of the E-site tRNA.</text>
</comment>
<comment type="subunit">
    <text evidence="1">Part of the 30S ribosomal subunit. Contacts proteins S9 and S11.</text>
</comment>
<comment type="similarity">
    <text evidence="1">Belongs to the universal ribosomal protein uS7 family.</text>
</comment>
<feature type="chain" id="PRO_0000124349" description="Small ribosomal subunit protein uS7">
    <location>
        <begin position="1"/>
        <end position="156"/>
    </location>
</feature>
<feature type="helix" evidence="3">
    <location>
        <begin position="22"/>
        <end position="29"/>
    </location>
</feature>
<feature type="helix" evidence="3">
    <location>
        <begin position="32"/>
        <end position="34"/>
    </location>
</feature>
<feature type="helix" evidence="3">
    <location>
        <begin position="37"/>
        <end position="52"/>
    </location>
</feature>
<feature type="turn" evidence="3">
    <location>
        <begin position="53"/>
        <end position="55"/>
    </location>
</feature>
<feature type="helix" evidence="3">
    <location>
        <begin position="58"/>
        <end position="68"/>
    </location>
</feature>
<feature type="strand" evidence="3">
    <location>
        <begin position="74"/>
        <end position="76"/>
    </location>
</feature>
<feature type="strand" evidence="3">
    <location>
        <begin position="87"/>
        <end position="89"/>
    </location>
</feature>
<feature type="helix" evidence="3">
    <location>
        <begin position="93"/>
        <end position="111"/>
    </location>
</feature>
<feature type="strand" evidence="3">
    <location>
        <begin position="114"/>
        <end position="117"/>
    </location>
</feature>
<feature type="helix" evidence="3">
    <location>
        <begin position="118"/>
        <end position="128"/>
    </location>
</feature>
<feature type="helix" evidence="3">
    <location>
        <begin position="133"/>
        <end position="147"/>
    </location>
</feature>
<feature type="helix" evidence="3">
    <location>
        <begin position="148"/>
        <end position="151"/>
    </location>
</feature>
<name>RS7_STAA8</name>
<accession>P48940</accession>
<accession>Q2G0N2</accession>